<keyword id="KW-0025">Alternative splicing</keyword>
<keyword id="KW-0067">ATP-binding</keyword>
<keyword id="KW-0963">Cytoplasm</keyword>
<keyword id="KW-0347">Helicase</keyword>
<keyword id="KW-0378">Hydrolase</keyword>
<keyword id="KW-0547">Nucleotide-binding</keyword>
<keyword id="KW-1185">Reference proteome</keyword>
<keyword id="KW-0678">Repressor</keyword>
<keyword id="KW-0943">RNA-mediated gene silencing</keyword>
<keyword id="KW-0810">Translation regulation</keyword>
<name>RDE12_CAEEL</name>
<proteinExistence type="evidence at protein level"/>
<comment type="function">
    <text evidence="6 7">Probable ATP-dependent RNA helicase involved in RNAi-mediated gene silencing (PubMed:24684930, PubMed:24684931). Specifically required in the endogenous siRNA pathway for biogenesis of secondary endogenous small interfering RNA (siRNA) intermediates called 22G-RNAs (PubMed:24684930, PubMed:24684931). May associate with and recruit rde-10 to primary siRNA-targeted mRNA for secondary siRNA synthesis (PubMed:24684930). May be recruited to target mRNAs by rde-1 and/or ergo-1 (PubMed:24684930, PubMed:24684931).</text>
</comment>
<comment type="catalytic activity">
    <reaction evidence="1">
        <text>ATP + H2O = ADP + phosphate + H(+)</text>
        <dbReference type="Rhea" id="RHEA:13065"/>
        <dbReference type="ChEBI" id="CHEBI:15377"/>
        <dbReference type="ChEBI" id="CHEBI:15378"/>
        <dbReference type="ChEBI" id="CHEBI:30616"/>
        <dbReference type="ChEBI" id="CHEBI:43474"/>
        <dbReference type="ChEBI" id="CHEBI:456216"/>
        <dbReference type="EC" id="3.6.4.13"/>
    </reaction>
</comment>
<comment type="cofactor">
    <cofactor evidence="1">
        <name>Mg(2+)</name>
        <dbReference type="ChEBI" id="CHEBI:18420"/>
    </cofactor>
</comment>
<comment type="subunit">
    <text evidence="7">Interacts with wago-1, ergo-1 and rde-1.</text>
</comment>
<comment type="subcellular location">
    <subcellularLocation>
        <location evidence="7">Cytoplasm</location>
        <location evidence="7">Perinuclear region</location>
    </subcellularLocation>
    <subcellularLocation>
        <location evidence="6 7">Cytoplasmic granule</location>
    </subcellularLocation>
    <subcellularLocation>
        <location evidence="7">Cytoplasm</location>
    </subcellularLocation>
    <subcellularLocation>
        <location evidence="6">Cytoplasm</location>
        <location evidence="6">P-body</location>
    </subcellularLocation>
    <text evidence="6">Colocalizes with pgl-1 in perinuclear P granules. Colocalizes with rsd-6 in a subset of germline and embryonic foci.</text>
</comment>
<comment type="alternative products">
    <event type="alternative splicing"/>
    <isoform>
        <id>P90897-1</id>
        <name evidence="10">a</name>
        <sequence type="displayed"/>
    </isoform>
    <isoform>
        <id>P90897-2</id>
        <name evidence="11">b</name>
        <sequence type="described" ref="VSP_057997"/>
    </isoform>
    <isoform>
        <id>P90897-3</id>
        <name evidence="12">c</name>
        <sequence type="described" ref="VSP_057996"/>
    </isoform>
</comment>
<comment type="tissue specificity">
    <text evidence="6">Expressed in the soma and germline.</text>
</comment>
<comment type="domain">
    <text evidence="6">The C-terminal region is necessary for localization to P granules.</text>
</comment>
<comment type="disruption phenotype">
    <text evidence="7">Viable with no obvious developmental defects. Insensitive to RNAi-mediated gene silencing. Increased sensitivity to viral infection.</text>
</comment>
<comment type="similarity">
    <text evidence="8">Belongs to the DEAD box helicase family. DDX3/DED1 subfamily.</text>
</comment>
<dbReference type="EC" id="3.6.4.13" evidence="1"/>
<dbReference type="EMBL" id="BX284605">
    <property type="protein sequence ID" value="CAB03153.4"/>
    <property type="molecule type" value="Genomic_DNA"/>
</dbReference>
<dbReference type="EMBL" id="BX284605">
    <property type="protein sequence ID" value="CCD31087.1"/>
    <property type="molecule type" value="Genomic_DNA"/>
</dbReference>
<dbReference type="EMBL" id="BX284605">
    <property type="protein sequence ID" value="CCD31088.1"/>
    <property type="molecule type" value="Genomic_DNA"/>
</dbReference>
<dbReference type="RefSeq" id="NP_001256533.1">
    <molecule id="P90897-1"/>
    <property type="nucleotide sequence ID" value="NM_001269604.3"/>
</dbReference>
<dbReference type="RefSeq" id="NP_001256534.1">
    <molecule id="P90897-2"/>
    <property type="nucleotide sequence ID" value="NM_001269605.2"/>
</dbReference>
<dbReference type="RefSeq" id="NP_001256535.1">
    <molecule id="P90897-3"/>
    <property type="nucleotide sequence ID" value="NM_001269606.3"/>
</dbReference>
<dbReference type="SMR" id="P90897"/>
<dbReference type="FunCoup" id="P90897">
    <property type="interactions" value="1043"/>
</dbReference>
<dbReference type="STRING" id="6239.F58G11.2a.1"/>
<dbReference type="PaxDb" id="6239-F58G11.2a"/>
<dbReference type="PeptideAtlas" id="P90897"/>
<dbReference type="EnsemblMetazoa" id="F58G11.2a.1">
    <molecule id="P90897-1"/>
    <property type="protein sequence ID" value="F58G11.2a.1"/>
    <property type="gene ID" value="WBGene00010280"/>
</dbReference>
<dbReference type="EnsemblMetazoa" id="F58G11.2b.1">
    <molecule id="P90897-2"/>
    <property type="protein sequence ID" value="F58G11.2b.1"/>
    <property type="gene ID" value="WBGene00010280"/>
</dbReference>
<dbReference type="EnsemblMetazoa" id="F58G11.2c.1">
    <molecule id="P90897-3"/>
    <property type="protein sequence ID" value="F58G11.2c.1"/>
    <property type="gene ID" value="WBGene00010280"/>
</dbReference>
<dbReference type="GeneID" id="179855"/>
<dbReference type="KEGG" id="cel:CELE_F58G11.2"/>
<dbReference type="UCSC" id="F58G11.2">
    <molecule id="P90897-1"/>
    <property type="organism name" value="c. elegans"/>
</dbReference>
<dbReference type="AGR" id="WB:WBGene00010280"/>
<dbReference type="CTD" id="179855"/>
<dbReference type="WormBase" id="F58G11.2a">
    <molecule id="P90897-1"/>
    <property type="protein sequence ID" value="CE44827"/>
    <property type="gene ID" value="WBGene00010280"/>
    <property type="gene designation" value="rde-12"/>
</dbReference>
<dbReference type="WormBase" id="F58G11.2b">
    <molecule id="P90897-2"/>
    <property type="protein sequence ID" value="CE46130"/>
    <property type="gene ID" value="WBGene00010280"/>
    <property type="gene designation" value="rde-12"/>
</dbReference>
<dbReference type="WormBase" id="F58G11.2c">
    <molecule id="P90897-3"/>
    <property type="protein sequence ID" value="CE46471"/>
    <property type="gene ID" value="WBGene00010280"/>
    <property type="gene designation" value="rde-12"/>
</dbReference>
<dbReference type="eggNOG" id="KOG0334">
    <property type="taxonomic scope" value="Eukaryota"/>
</dbReference>
<dbReference type="HOGENOM" id="CLU_007063_0_0_1"/>
<dbReference type="InParanoid" id="P90897"/>
<dbReference type="OMA" id="TCGRIMD"/>
<dbReference type="OrthoDB" id="5871318at2759"/>
<dbReference type="PRO" id="PR:P90897"/>
<dbReference type="Proteomes" id="UP000001940">
    <property type="component" value="Chromosome V"/>
</dbReference>
<dbReference type="Bgee" id="WBGene00010280">
    <property type="expression patterns" value="Expressed in larva and 4 other cell types or tissues"/>
</dbReference>
<dbReference type="GO" id="GO:0005737">
    <property type="term" value="C:cytoplasm"/>
    <property type="evidence" value="ECO:0000314"/>
    <property type="project" value="WormBase"/>
</dbReference>
<dbReference type="GO" id="GO:0005634">
    <property type="term" value="C:nucleus"/>
    <property type="evidence" value="ECO:0000318"/>
    <property type="project" value="GO_Central"/>
</dbReference>
<dbReference type="GO" id="GO:0043186">
    <property type="term" value="C:P granule"/>
    <property type="evidence" value="ECO:0000314"/>
    <property type="project" value="WormBase"/>
</dbReference>
<dbReference type="GO" id="GO:0000932">
    <property type="term" value="C:P-body"/>
    <property type="evidence" value="ECO:0007669"/>
    <property type="project" value="UniProtKB-SubCell"/>
</dbReference>
<dbReference type="GO" id="GO:0048471">
    <property type="term" value="C:perinuclear region of cytoplasm"/>
    <property type="evidence" value="ECO:0000314"/>
    <property type="project" value="WormBase"/>
</dbReference>
<dbReference type="GO" id="GO:0031332">
    <property type="term" value="C:RNAi effector complex"/>
    <property type="evidence" value="ECO:0000314"/>
    <property type="project" value="WormBase"/>
</dbReference>
<dbReference type="GO" id="GO:0005524">
    <property type="term" value="F:ATP binding"/>
    <property type="evidence" value="ECO:0007669"/>
    <property type="project" value="UniProtKB-KW"/>
</dbReference>
<dbReference type="GO" id="GO:0016887">
    <property type="term" value="F:ATP hydrolysis activity"/>
    <property type="evidence" value="ECO:0007669"/>
    <property type="project" value="RHEA"/>
</dbReference>
<dbReference type="GO" id="GO:0019899">
    <property type="term" value="F:enzyme binding"/>
    <property type="evidence" value="ECO:0000353"/>
    <property type="project" value="WormBase"/>
</dbReference>
<dbReference type="GO" id="GO:0003729">
    <property type="term" value="F:mRNA binding"/>
    <property type="evidence" value="ECO:0000318"/>
    <property type="project" value="GO_Central"/>
</dbReference>
<dbReference type="GO" id="GO:0003724">
    <property type="term" value="F:RNA helicase activity"/>
    <property type="evidence" value="ECO:0000318"/>
    <property type="project" value="GO_Central"/>
</dbReference>
<dbReference type="GO" id="GO:0030154">
    <property type="term" value="P:cell differentiation"/>
    <property type="evidence" value="ECO:0000318"/>
    <property type="project" value="GO_Central"/>
</dbReference>
<dbReference type="GO" id="GO:0007276">
    <property type="term" value="P:gamete generation"/>
    <property type="evidence" value="ECO:0000318"/>
    <property type="project" value="GO_Central"/>
</dbReference>
<dbReference type="GO" id="GO:0007281">
    <property type="term" value="P:germ cell development"/>
    <property type="evidence" value="ECO:0000318"/>
    <property type="project" value="GO_Central"/>
</dbReference>
<dbReference type="GO" id="GO:0006417">
    <property type="term" value="P:regulation of translation"/>
    <property type="evidence" value="ECO:0007669"/>
    <property type="project" value="UniProtKB-KW"/>
</dbReference>
<dbReference type="GO" id="GO:0043330">
    <property type="term" value="P:response to exogenous dsRNA"/>
    <property type="evidence" value="ECO:0000315"/>
    <property type="project" value="WormBase"/>
</dbReference>
<dbReference type="GO" id="GO:0030422">
    <property type="term" value="P:siRNA processing"/>
    <property type="evidence" value="ECO:0000315"/>
    <property type="project" value="WormBase"/>
</dbReference>
<dbReference type="CDD" id="cd00268">
    <property type="entry name" value="DEADc"/>
    <property type="match status" value="1"/>
</dbReference>
<dbReference type="CDD" id="cd18787">
    <property type="entry name" value="SF2_C_DEAD"/>
    <property type="match status" value="1"/>
</dbReference>
<dbReference type="Gene3D" id="3.40.50.300">
    <property type="entry name" value="P-loop containing nucleotide triphosphate hydrolases"/>
    <property type="match status" value="2"/>
</dbReference>
<dbReference type="InterPro" id="IPR011545">
    <property type="entry name" value="DEAD/DEAH_box_helicase_dom"/>
</dbReference>
<dbReference type="InterPro" id="IPR050079">
    <property type="entry name" value="DEAD_box_RNA_helicase"/>
</dbReference>
<dbReference type="InterPro" id="IPR014001">
    <property type="entry name" value="Helicase_ATP-bd"/>
</dbReference>
<dbReference type="InterPro" id="IPR001650">
    <property type="entry name" value="Helicase_C-like"/>
</dbReference>
<dbReference type="InterPro" id="IPR027417">
    <property type="entry name" value="P-loop_NTPase"/>
</dbReference>
<dbReference type="InterPro" id="IPR000629">
    <property type="entry name" value="RNA-helicase_DEAD-box_CS"/>
</dbReference>
<dbReference type="PANTHER" id="PTHR47959:SF1">
    <property type="entry name" value="ATP-DEPENDENT RNA HELICASE DBPA"/>
    <property type="match status" value="1"/>
</dbReference>
<dbReference type="PANTHER" id="PTHR47959">
    <property type="entry name" value="ATP-DEPENDENT RNA HELICASE RHLE-RELATED"/>
    <property type="match status" value="1"/>
</dbReference>
<dbReference type="Pfam" id="PF00270">
    <property type="entry name" value="DEAD"/>
    <property type="match status" value="1"/>
</dbReference>
<dbReference type="Pfam" id="PF00271">
    <property type="entry name" value="Helicase_C"/>
    <property type="match status" value="1"/>
</dbReference>
<dbReference type="SMART" id="SM00487">
    <property type="entry name" value="DEXDc"/>
    <property type="match status" value="1"/>
</dbReference>
<dbReference type="SMART" id="SM00490">
    <property type="entry name" value="HELICc"/>
    <property type="match status" value="1"/>
</dbReference>
<dbReference type="SUPFAM" id="SSF52540">
    <property type="entry name" value="P-loop containing nucleoside triphosphate hydrolases"/>
    <property type="match status" value="1"/>
</dbReference>
<dbReference type="PROSITE" id="PS00039">
    <property type="entry name" value="DEAD_ATP_HELICASE"/>
    <property type="match status" value="1"/>
</dbReference>
<dbReference type="PROSITE" id="PS51192">
    <property type="entry name" value="HELICASE_ATP_BIND_1"/>
    <property type="match status" value="1"/>
</dbReference>
<dbReference type="PROSITE" id="PS51194">
    <property type="entry name" value="HELICASE_CTER"/>
    <property type="match status" value="1"/>
</dbReference>
<dbReference type="PROSITE" id="PS51195">
    <property type="entry name" value="Q_MOTIF"/>
    <property type="match status" value="1"/>
</dbReference>
<gene>
    <name evidence="10" type="primary">rde-12</name>
    <name evidence="10" type="ORF">F58G11.2</name>
</gene>
<organism evidence="9">
    <name type="scientific">Caenorhabditis elegans</name>
    <dbReference type="NCBI Taxonomy" id="6239"/>
    <lineage>
        <taxon>Eukaryota</taxon>
        <taxon>Metazoa</taxon>
        <taxon>Ecdysozoa</taxon>
        <taxon>Nematoda</taxon>
        <taxon>Chromadorea</taxon>
        <taxon>Rhabditida</taxon>
        <taxon>Rhabditina</taxon>
        <taxon>Rhabditomorpha</taxon>
        <taxon>Rhabditoidea</taxon>
        <taxon>Rhabditidae</taxon>
        <taxon>Peloderinae</taxon>
        <taxon>Caenorhabditis</taxon>
    </lineage>
</organism>
<accession>P90897</accession>
<accession>G3MU56</accession>
<accession>G3MU57</accession>
<reference evidence="9" key="1">
    <citation type="journal article" date="1998" name="Science">
        <title>Genome sequence of the nematode C. elegans: a platform for investigating biology.</title>
        <authorList>
            <consortium name="The C. elegans sequencing consortium"/>
        </authorList>
    </citation>
    <scope>NUCLEOTIDE SEQUENCE [LARGE SCALE GENOMIC DNA]</scope>
    <source>
        <strain evidence="9">Bristol N2</strain>
    </source>
</reference>
<reference evidence="8" key="2">
    <citation type="journal article" date="2014" name="Curr. Biol.">
        <title>The DEAD box helicase RDE-12 promotes amplification of RNAi in cytoplasmic foci in C. elegans.</title>
        <authorList>
            <person name="Yang H."/>
            <person name="Vallandingham J."/>
            <person name="Shiu P."/>
            <person name="Li H."/>
            <person name="Hunter C.P."/>
            <person name="Mak H.Y."/>
        </authorList>
    </citation>
    <scope>FUNCTION</scope>
    <scope>SUBCELLULAR LOCATION</scope>
    <scope>TISSUE SPECIFICITY</scope>
    <scope>DOMAIN</scope>
    <scope>MUTAGENESIS OF 540-GLU--THR-580</scope>
</reference>
<reference evidence="8" key="3">
    <citation type="journal article" date="2014" name="Curr. Biol.">
        <title>The vasa homolog rde-12 engages target mRNA and multiple argonaute proteins to promote RNAi in C. elegans.</title>
        <authorList>
            <person name="Shirayama M."/>
            <person name="Stanney W."/>
            <person name="Gu W."/>
            <person name="Seth M."/>
            <person name="Mello C.C."/>
        </authorList>
    </citation>
    <scope>IDENTIFICATION BY MASS SPECTROMETRY</scope>
    <scope>FUNCTION</scope>
    <scope>INTERACTION WITH WAGO-1; ERGO-1 AND RDE-1</scope>
    <scope>SUBCELLULAR LOCATION</scope>
    <scope>DISRUPTION PHENOTYPE</scope>
    <scope>MUTAGENESIS OF LYS-430</scope>
</reference>
<feature type="chain" id="PRO_0000435004" description="DEAD-box ATP-dependent RNA helicase rde-12" evidence="8">
    <location>
        <begin position="1"/>
        <end position="959"/>
    </location>
</feature>
<feature type="domain" description="Helicase ATP-binding" evidence="2">
    <location>
        <begin position="411"/>
        <end position="599"/>
    </location>
</feature>
<feature type="domain" description="Helicase C-terminal" evidence="3">
    <location>
        <begin position="632"/>
        <end position="792"/>
    </location>
</feature>
<feature type="region of interest" description="Disordered" evidence="5">
    <location>
        <begin position="1"/>
        <end position="336"/>
    </location>
</feature>
<feature type="region of interest" description="Disordered" evidence="5">
    <location>
        <begin position="793"/>
        <end position="834"/>
    </location>
</feature>
<feature type="region of interest" description="Disordered" evidence="5">
    <location>
        <begin position="858"/>
        <end position="959"/>
    </location>
</feature>
<feature type="short sequence motif" description="Q motif" evidence="4">
    <location>
        <begin position="380"/>
        <end position="408"/>
    </location>
</feature>
<feature type="short sequence motif" description="DEAD box" evidence="2">
    <location>
        <begin position="539"/>
        <end position="542"/>
    </location>
</feature>
<feature type="compositionally biased region" description="Basic and acidic residues" evidence="5">
    <location>
        <begin position="71"/>
        <end position="97"/>
    </location>
</feature>
<feature type="compositionally biased region" description="Polar residues" evidence="5">
    <location>
        <begin position="98"/>
        <end position="118"/>
    </location>
</feature>
<feature type="compositionally biased region" description="Basic and acidic residues" evidence="5">
    <location>
        <begin position="122"/>
        <end position="134"/>
    </location>
</feature>
<feature type="compositionally biased region" description="Polar residues" evidence="5">
    <location>
        <begin position="137"/>
        <end position="160"/>
    </location>
</feature>
<feature type="compositionally biased region" description="Basic and acidic residues" evidence="5">
    <location>
        <begin position="166"/>
        <end position="181"/>
    </location>
</feature>
<feature type="compositionally biased region" description="Basic and acidic residues" evidence="5">
    <location>
        <begin position="189"/>
        <end position="201"/>
    </location>
</feature>
<feature type="compositionally biased region" description="Polar residues" evidence="5">
    <location>
        <begin position="202"/>
        <end position="213"/>
    </location>
</feature>
<feature type="compositionally biased region" description="Basic and acidic residues" evidence="5">
    <location>
        <begin position="219"/>
        <end position="239"/>
    </location>
</feature>
<feature type="compositionally biased region" description="Basic and acidic residues" evidence="5">
    <location>
        <begin position="255"/>
        <end position="270"/>
    </location>
</feature>
<feature type="compositionally biased region" description="Low complexity" evidence="5">
    <location>
        <begin position="271"/>
        <end position="280"/>
    </location>
</feature>
<feature type="compositionally biased region" description="Gly residues" evidence="5">
    <location>
        <begin position="281"/>
        <end position="301"/>
    </location>
</feature>
<feature type="compositionally biased region" description="Low complexity" evidence="5">
    <location>
        <begin position="302"/>
        <end position="317"/>
    </location>
</feature>
<feature type="compositionally biased region" description="Gly residues" evidence="5">
    <location>
        <begin position="800"/>
        <end position="834"/>
    </location>
</feature>
<feature type="compositionally biased region" description="Gly residues" evidence="5">
    <location>
        <begin position="858"/>
        <end position="872"/>
    </location>
</feature>
<feature type="compositionally biased region" description="Polar residues" evidence="5">
    <location>
        <begin position="930"/>
        <end position="941"/>
    </location>
</feature>
<feature type="compositionally biased region" description="Acidic residues" evidence="5">
    <location>
        <begin position="942"/>
        <end position="959"/>
    </location>
</feature>
<feature type="binding site" evidence="2">
    <location>
        <begin position="424"/>
        <end position="431"/>
    </location>
    <ligand>
        <name>ATP</name>
        <dbReference type="ChEBI" id="CHEBI:30616"/>
    </ligand>
</feature>
<feature type="splice variant" id="VSP_057996" description="In isoform c." evidence="8">
    <original>GGHQGNHGNSYGRREDDRSH</original>
    <variation>D</variation>
    <location>
        <begin position="60"/>
        <end position="79"/>
    </location>
</feature>
<feature type="splice variant" id="VSP_057997" description="In isoform b." evidence="8">
    <location>
        <begin position="73"/>
        <end position="78"/>
    </location>
</feature>
<feature type="mutagenesis site" description="RNAi gene targeting defect." evidence="7">
    <original>K</original>
    <variation>A</variation>
    <location>
        <position position="430"/>
    </location>
</feature>
<feature type="mutagenesis site" description="Results in accumulation in cytoplasm." evidence="6">
    <original>E</original>
    <variation>Q</variation>
    <location>
        <position position="540"/>
    </location>
</feature>
<feature type="mutagenesis site" description="Results in accumulation in cytoplasm." evidence="6">
    <original>SAT</original>
    <variation>AAA</variation>
    <location>
        <begin position="578"/>
        <end position="580"/>
    </location>
</feature>
<evidence type="ECO:0000250" key="1">
    <source>
        <dbReference type="UniProtKB" id="P09052"/>
    </source>
</evidence>
<evidence type="ECO:0000255" key="2">
    <source>
        <dbReference type="PROSITE-ProRule" id="PRU00541"/>
    </source>
</evidence>
<evidence type="ECO:0000255" key="3">
    <source>
        <dbReference type="PROSITE-ProRule" id="PRU00542"/>
    </source>
</evidence>
<evidence type="ECO:0000255" key="4">
    <source>
        <dbReference type="PROSITE-ProRule" id="PRU00552"/>
    </source>
</evidence>
<evidence type="ECO:0000256" key="5">
    <source>
        <dbReference type="SAM" id="MobiDB-lite"/>
    </source>
</evidence>
<evidence type="ECO:0000269" key="6">
    <source>
    </source>
</evidence>
<evidence type="ECO:0000269" key="7">
    <source>
    </source>
</evidence>
<evidence type="ECO:0000305" key="8"/>
<evidence type="ECO:0000312" key="9">
    <source>
        <dbReference type="Proteomes" id="UP000001940"/>
    </source>
</evidence>
<evidence type="ECO:0000312" key="10">
    <source>
        <dbReference type="WormBase" id="F58G11.2a"/>
    </source>
</evidence>
<evidence type="ECO:0000312" key="11">
    <source>
        <dbReference type="WormBase" id="F58G11.2b"/>
    </source>
</evidence>
<evidence type="ECO:0000312" key="12">
    <source>
        <dbReference type="WormBase" id="F58G11.2c"/>
    </source>
</evidence>
<sequence length="959" mass="103832">MSSFGNNAGGGGREYHDDRSNRDHRHGNGGSDAGQRRREDHNSSYQSYRRPDGRQDSYGGGHQGNHGNSYGRREDDRSHSRDNHGGSRYGERDDRGNNGRSADNRYSQSNYNYDSNRGGQHYQRDNHGSKDDRGPMNQYNDHGSNHNSNSRNDQYRQGSYQGDGHSGYRRDDDRRRNDNDQARPYQSNRDSDRNSPRDHHNYNSQSSPRSHQGGQDRYSAPKEDNQRRYDNHQGGHDSYRGQNSGGYSGNNSGEYRNDYRSQQDSRDHRSGGNNSSSGFKNDGGFGGNDNRGFGNNGGGSFGNPNNSYRGNSNNIGGFHRSDGSNSEGVNAPVRAPRDWVPVTRDIDELVRETADRLADCDVGQDRAVEIRNAEKDVRLTSWTNSGLHPTILETLKRIKYNNVRTIQGAMIPQVLDGHDVLGQAETSAGKTAAFGLPIIDKILRMDEETRNKARQDDGPLALILAPTRELAAQIHEALRTYCQNTDIIVLLSYGQSDRARSLNEIRNGCDILIGTCGRIMDFTVKSHISLLHLRFLVFDEADRLLQDMKKDPLGHLGAIIKDAGFMESAATRQTIMTSATFNASVMTVANELMKRLPGQDEMIKIVLANGRLSKRVNLEFFECKGLAEKNAKLREILKQNVNGKTLKTIIFVQKKDQCDACAAKLTSGGMLAQTLHGDRSQDMREKLINDFKSNRVNLLVTTDLLSRGIDVSDLDRVINFDLPDGDPDQGADTFIHRAGRTGRTGRKENGLCVSFVDPQSDRDSLLAPKLVELIISQNLPDLKVPDFLDAMAKSSRGKSGTSGFGQRGGYGGRGGGFGGTGRGRGGGVFGGGGRGGDFGGSGNFGGSGGGGSFGGSGGGGGFGGVKPSGFGGSRNNAEPTSSGGGFGAPKAPTGFPSDNNDASEDAPAAGGFGFSTKAAQDAKKAEESATLGSSTFGTANNADEEPTETGADGNDDDEW</sequence>
<protein>
    <recommendedName>
        <fullName evidence="8">DEAD-box ATP-dependent RNA helicase rde-12</fullName>
        <ecNumber evidence="1">3.6.4.13</ecNumber>
    </recommendedName>
    <alternativeName>
        <fullName evidence="10">RNA interference defective protein 12</fullName>
    </alternativeName>
</protein>